<organism>
    <name type="scientific">Nematostella vectensis</name>
    <name type="common">Starlet sea anemone</name>
    <dbReference type="NCBI Taxonomy" id="45351"/>
    <lineage>
        <taxon>Eukaryota</taxon>
        <taxon>Metazoa</taxon>
        <taxon>Cnidaria</taxon>
        <taxon>Anthozoa</taxon>
        <taxon>Hexacorallia</taxon>
        <taxon>Actiniaria</taxon>
        <taxon>Edwardsiidae</taxon>
        <taxon>Nematostella</taxon>
    </lineage>
</organism>
<name>DNPH1_NEMVE</name>
<keyword id="KW-0963">Cytoplasm</keyword>
<keyword id="KW-0326">Glycosidase</keyword>
<keyword id="KW-0378">Hydrolase</keyword>
<keyword id="KW-0546">Nucleotide metabolism</keyword>
<keyword id="KW-0539">Nucleus</keyword>
<keyword id="KW-1185">Reference proteome</keyword>
<reference key="1">
    <citation type="journal article" date="2007" name="Science">
        <title>Sea anemone genome reveals ancestral eumetazoan gene repertoire and genomic organization.</title>
        <authorList>
            <person name="Putnam N.H."/>
            <person name="Srivastava M."/>
            <person name="Hellsten U."/>
            <person name="Dirks B."/>
            <person name="Chapman J."/>
            <person name="Salamov A."/>
            <person name="Terry A."/>
            <person name="Shapiro H."/>
            <person name="Lindquist E."/>
            <person name="Kapitonov V.V."/>
            <person name="Jurka J."/>
            <person name="Genikhovich G."/>
            <person name="Grigoriev I.V."/>
            <person name="Lucas S.M."/>
            <person name="Steele R.E."/>
            <person name="Finnerty J.R."/>
            <person name="Technau U."/>
            <person name="Martindale M.Q."/>
            <person name="Rokhsar D.S."/>
        </authorList>
    </citation>
    <scope>NUCLEOTIDE SEQUENCE [LARGE SCALE GENOMIC DNA]</scope>
    <source>
        <strain>CH2 X CH6</strain>
    </source>
</reference>
<feature type="chain" id="PRO_0000379460" description="Putative 2'-deoxynucleoside 5'-phosphate N-hydrolase 1">
    <location>
        <begin position="1"/>
        <end position="147"/>
    </location>
</feature>
<feature type="binding site" description="in other chain" evidence="2">
    <location>
        <begin position="10"/>
        <end position="16"/>
    </location>
    <ligand>
        <name>substrate</name>
        <note>ligand shared between homodimeric partners</note>
    </ligand>
</feature>
<feature type="binding site" description="in other chain" evidence="2">
    <location>
        <position position="25"/>
    </location>
    <ligand>
        <name>substrate</name>
        <note>ligand shared between homodimeric partners</note>
    </ligand>
</feature>
<feature type="binding site" description="in other chain" evidence="1">
    <location>
        <position position="42"/>
    </location>
    <ligand>
        <name>substrate</name>
        <note>ligand shared between homodimeric partners</note>
    </ligand>
</feature>
<feature type="binding site" description="in other chain" evidence="2">
    <location>
        <position position="90"/>
    </location>
    <ligand>
        <name>substrate</name>
        <note>ligand shared between homodimeric partners</note>
    </ligand>
</feature>
<feature type="binding site" evidence="2">
    <location>
        <begin position="114"/>
        <end position="116"/>
    </location>
    <ligand>
        <name>substrate</name>
        <note>ligand shared between homodimeric partners</note>
    </ligand>
</feature>
<gene>
    <name type="ORF">v1g160099</name>
</gene>
<comment type="function">
    <text evidence="2">Catalyzes the cleavage of the N-glycosidic bond of deoxyribonucleoside 5'-monophosphates to yield deoxyribose 5-phosphate and a purine or pyrimidine base.</text>
</comment>
<comment type="catalytic activity">
    <reaction evidence="2">
        <text>a pyrimidine 2'-deoxyribonucleoside 5'-phosphate + H2O = a pyrimidine nucleobase + 2-deoxy-D-ribose 5-phosphate</text>
        <dbReference type="Rhea" id="RHEA:57852"/>
        <dbReference type="ChEBI" id="CHEBI:15377"/>
        <dbReference type="ChEBI" id="CHEBI:26432"/>
        <dbReference type="ChEBI" id="CHEBI:62877"/>
        <dbReference type="ChEBI" id="CHEBI:142209"/>
    </reaction>
</comment>
<comment type="catalytic activity">
    <reaction evidence="2">
        <text>a purine 2'-deoxyribonucleoside 5'-phosphate + H2O = a purine nucleobase + 2-deoxy-D-ribose 5-phosphate</text>
        <dbReference type="Rhea" id="RHEA:51132"/>
        <dbReference type="ChEBI" id="CHEBI:15377"/>
        <dbReference type="ChEBI" id="CHEBI:26386"/>
        <dbReference type="ChEBI" id="CHEBI:62877"/>
        <dbReference type="ChEBI" id="CHEBI:142198"/>
    </reaction>
</comment>
<comment type="subunit">
    <text evidence="2">Monomer and homodimer.</text>
</comment>
<comment type="subcellular location">
    <subcellularLocation>
        <location evidence="2">Cytoplasm</location>
    </subcellularLocation>
    <subcellularLocation>
        <location evidence="2">Nucleus</location>
    </subcellularLocation>
</comment>
<comment type="similarity">
    <text evidence="2">Belongs to the 2'-deoxynucleoside 5'-phosphate N-hydrolase 1 family.</text>
</comment>
<protein>
    <recommendedName>
        <fullName evidence="2">Putative 2'-deoxynucleoside 5'-phosphate N-hydrolase 1</fullName>
        <ecNumber evidence="2">3.2.2.-</ecNumber>
    </recommendedName>
</protein>
<accession>A7RLE5</accession>
<evidence type="ECO:0000250" key="1">
    <source>
        <dbReference type="UniProtKB" id="O35820"/>
    </source>
</evidence>
<evidence type="ECO:0000255" key="2">
    <source>
        <dbReference type="HAMAP-Rule" id="MF_03036"/>
    </source>
</evidence>
<dbReference type="EC" id="3.2.2.-" evidence="2"/>
<dbReference type="EMBL" id="DS469518">
    <property type="protein sequence ID" value="EDO47678.1"/>
    <property type="molecule type" value="Genomic_DNA"/>
</dbReference>
<dbReference type="RefSeq" id="XP_001639741.1">
    <property type="nucleotide sequence ID" value="XM_001639691.1"/>
</dbReference>
<dbReference type="SMR" id="A7RLE5"/>
<dbReference type="STRING" id="45351.A7RLE5"/>
<dbReference type="EnsemblMetazoa" id="EDO47678">
    <property type="protein sequence ID" value="EDO47678"/>
    <property type="gene ID" value="NEMVEDRAFT_v1g160099"/>
</dbReference>
<dbReference type="eggNOG" id="ENOG502S2J2">
    <property type="taxonomic scope" value="Eukaryota"/>
</dbReference>
<dbReference type="HOGENOM" id="CLU_100069_1_0_1"/>
<dbReference type="InParanoid" id="A7RLE5"/>
<dbReference type="OMA" id="EVLSWHV"/>
<dbReference type="PhylomeDB" id="A7RLE5"/>
<dbReference type="Proteomes" id="UP000001593">
    <property type="component" value="Unassembled WGS sequence"/>
</dbReference>
<dbReference type="GO" id="GO:0005737">
    <property type="term" value="C:cytoplasm"/>
    <property type="evidence" value="ECO:0007669"/>
    <property type="project" value="UniProtKB-SubCell"/>
</dbReference>
<dbReference type="GO" id="GO:0005634">
    <property type="term" value="C:nucleus"/>
    <property type="evidence" value="ECO:0000250"/>
    <property type="project" value="UniProtKB"/>
</dbReference>
<dbReference type="GO" id="GO:0070694">
    <property type="term" value="F:5-hydroxymethyl-dUMP N-hydrolase activity"/>
    <property type="evidence" value="ECO:0000250"/>
    <property type="project" value="UniProtKB"/>
</dbReference>
<dbReference type="GO" id="GO:0009159">
    <property type="term" value="P:deoxyribonucleoside monophosphate catabolic process"/>
    <property type="evidence" value="ECO:0000250"/>
    <property type="project" value="UniProtKB"/>
</dbReference>
<dbReference type="GO" id="GO:0009116">
    <property type="term" value="P:nucleoside metabolic process"/>
    <property type="evidence" value="ECO:0007669"/>
    <property type="project" value="UniProtKB-UniRule"/>
</dbReference>
<dbReference type="GO" id="GO:0009117">
    <property type="term" value="P:nucleotide metabolic process"/>
    <property type="evidence" value="ECO:0007669"/>
    <property type="project" value="UniProtKB-KW"/>
</dbReference>
<dbReference type="GO" id="GO:0030307">
    <property type="term" value="P:positive regulation of cell growth"/>
    <property type="evidence" value="ECO:0000250"/>
    <property type="project" value="UniProtKB"/>
</dbReference>
<dbReference type="FunFam" id="3.40.50.450:FF:000019">
    <property type="entry name" value="2'-deoxynucleoside 5'-phosphate N-hydrolase 1"/>
    <property type="match status" value="1"/>
</dbReference>
<dbReference type="Gene3D" id="3.40.50.450">
    <property type="match status" value="1"/>
</dbReference>
<dbReference type="HAMAP" id="MF_03036">
    <property type="entry name" value="Nuc_phosphate_hydrolase"/>
    <property type="match status" value="1"/>
</dbReference>
<dbReference type="InterPro" id="IPR051239">
    <property type="entry name" value="2'-dNMP_N-hydrolase"/>
</dbReference>
<dbReference type="InterPro" id="IPR028607">
    <property type="entry name" value="DNPH1"/>
</dbReference>
<dbReference type="InterPro" id="IPR007710">
    <property type="entry name" value="Nucleoside_deoxyribTrfase"/>
</dbReference>
<dbReference type="PANTHER" id="PTHR15364">
    <property type="entry name" value="2'-DEOXYNUCLEOSIDE 5'-PHOSPHATE N-HYDROLASE 1"/>
    <property type="match status" value="1"/>
</dbReference>
<dbReference type="PANTHER" id="PTHR15364:SF0">
    <property type="entry name" value="2'-DEOXYNUCLEOSIDE 5'-PHOSPHATE N-HYDROLASE 1"/>
    <property type="match status" value="1"/>
</dbReference>
<dbReference type="Pfam" id="PF05014">
    <property type="entry name" value="Nuc_deoxyrib_tr"/>
    <property type="match status" value="1"/>
</dbReference>
<dbReference type="SUPFAM" id="SSF52309">
    <property type="entry name" value="N-(deoxy)ribosyltransferase-like"/>
    <property type="match status" value="1"/>
</dbReference>
<proteinExistence type="inferred from homology"/>
<sequence>MSSKVTRKIYFCGSIRGGREDAALYKRIIDQLQSYGEVLTEHVGDLEAQEEELGETCDDYYIHERDINWLFSSDAVVAEVTQPSLGVGYELGRALEHKKNVLCLYRPQPGKRLSAMIKGAENGKNFFVKEYKEEDVPDLLMNFFTSL</sequence>